<sequence length="132" mass="14361">MALTLDIVTPEKRVLSVQVDEVRAPGVQGGFGVRLNHEPFMTALEPGRLTYVEGGREHHYAVGGGFLQVADNRVIVLADTAEAAGEIDVDRARKAFEDAQNRLLQLTEQDESHSAESARVRRAAARLTVAGR</sequence>
<reference key="1">
    <citation type="submission" date="2009-01" db="EMBL/GenBank/DDBJ databases">
        <title>Complete sequence of Anaeromyxobacter dehalogenans 2CP-1.</title>
        <authorList>
            <person name="Lucas S."/>
            <person name="Copeland A."/>
            <person name="Lapidus A."/>
            <person name="Glavina del Rio T."/>
            <person name="Dalin E."/>
            <person name="Tice H."/>
            <person name="Bruce D."/>
            <person name="Goodwin L."/>
            <person name="Pitluck S."/>
            <person name="Saunders E."/>
            <person name="Brettin T."/>
            <person name="Detter J.C."/>
            <person name="Han C."/>
            <person name="Larimer F."/>
            <person name="Land M."/>
            <person name="Hauser L."/>
            <person name="Kyrpides N."/>
            <person name="Ovchinnikova G."/>
            <person name="Beliaev A.S."/>
            <person name="Richardson P."/>
        </authorList>
    </citation>
    <scope>NUCLEOTIDE SEQUENCE [LARGE SCALE GENOMIC DNA]</scope>
    <source>
        <strain>2CP-1 / ATCC BAA-258</strain>
    </source>
</reference>
<evidence type="ECO:0000255" key="1">
    <source>
        <dbReference type="HAMAP-Rule" id="MF_00530"/>
    </source>
</evidence>
<keyword id="KW-0066">ATP synthesis</keyword>
<keyword id="KW-0997">Cell inner membrane</keyword>
<keyword id="KW-1003">Cell membrane</keyword>
<keyword id="KW-0139">CF(1)</keyword>
<keyword id="KW-0375">Hydrogen ion transport</keyword>
<keyword id="KW-0406">Ion transport</keyword>
<keyword id="KW-0472">Membrane</keyword>
<keyword id="KW-0813">Transport</keyword>
<organism>
    <name type="scientific">Anaeromyxobacter dehalogenans (strain 2CP-1 / ATCC BAA-258)</name>
    <dbReference type="NCBI Taxonomy" id="455488"/>
    <lineage>
        <taxon>Bacteria</taxon>
        <taxon>Pseudomonadati</taxon>
        <taxon>Myxococcota</taxon>
        <taxon>Myxococcia</taxon>
        <taxon>Myxococcales</taxon>
        <taxon>Cystobacterineae</taxon>
        <taxon>Anaeromyxobacteraceae</taxon>
        <taxon>Anaeromyxobacter</taxon>
    </lineage>
</organism>
<comment type="function">
    <text evidence="1">Produces ATP from ADP in the presence of a proton gradient across the membrane.</text>
</comment>
<comment type="subunit">
    <text evidence="1">F-type ATPases have 2 components, CF(1) - the catalytic core - and CF(0) - the membrane proton channel. CF(1) has five subunits: alpha(3), beta(3), gamma(1), delta(1), epsilon(1). CF(0) has three main subunits: a, b and c.</text>
</comment>
<comment type="subcellular location">
    <subcellularLocation>
        <location evidence="1">Cell inner membrane</location>
        <topology evidence="1">Peripheral membrane protein</topology>
    </subcellularLocation>
</comment>
<comment type="similarity">
    <text evidence="1">Belongs to the ATPase epsilon chain family.</text>
</comment>
<gene>
    <name evidence="1" type="primary">atpC</name>
    <name type="ordered locus">A2cp1_4502</name>
</gene>
<name>ATPE_ANAD2</name>
<feature type="chain" id="PRO_1000146306" description="ATP synthase epsilon chain">
    <location>
        <begin position="1"/>
        <end position="132"/>
    </location>
</feature>
<protein>
    <recommendedName>
        <fullName evidence="1">ATP synthase epsilon chain</fullName>
    </recommendedName>
    <alternativeName>
        <fullName evidence="1">ATP synthase F1 sector epsilon subunit</fullName>
    </alternativeName>
    <alternativeName>
        <fullName evidence="1">F-ATPase epsilon subunit</fullName>
    </alternativeName>
</protein>
<proteinExistence type="inferred from homology"/>
<dbReference type="EMBL" id="CP001359">
    <property type="protein sequence ID" value="ACL67819.1"/>
    <property type="molecule type" value="Genomic_DNA"/>
</dbReference>
<dbReference type="RefSeq" id="WP_015935497.1">
    <property type="nucleotide sequence ID" value="NC_011891.1"/>
</dbReference>
<dbReference type="SMR" id="B8JCU9"/>
<dbReference type="KEGG" id="acp:A2cp1_4502"/>
<dbReference type="HOGENOM" id="CLU_084338_2_1_7"/>
<dbReference type="Proteomes" id="UP000007089">
    <property type="component" value="Chromosome"/>
</dbReference>
<dbReference type="GO" id="GO:0005886">
    <property type="term" value="C:plasma membrane"/>
    <property type="evidence" value="ECO:0007669"/>
    <property type="project" value="UniProtKB-SubCell"/>
</dbReference>
<dbReference type="GO" id="GO:0045259">
    <property type="term" value="C:proton-transporting ATP synthase complex"/>
    <property type="evidence" value="ECO:0007669"/>
    <property type="project" value="UniProtKB-KW"/>
</dbReference>
<dbReference type="GO" id="GO:0005524">
    <property type="term" value="F:ATP binding"/>
    <property type="evidence" value="ECO:0007669"/>
    <property type="project" value="UniProtKB-UniRule"/>
</dbReference>
<dbReference type="GO" id="GO:0046933">
    <property type="term" value="F:proton-transporting ATP synthase activity, rotational mechanism"/>
    <property type="evidence" value="ECO:0007669"/>
    <property type="project" value="UniProtKB-UniRule"/>
</dbReference>
<dbReference type="CDD" id="cd12152">
    <property type="entry name" value="F1-ATPase_delta"/>
    <property type="match status" value="1"/>
</dbReference>
<dbReference type="Gene3D" id="2.60.15.10">
    <property type="entry name" value="F0F1 ATP synthase delta/epsilon subunit, N-terminal"/>
    <property type="match status" value="1"/>
</dbReference>
<dbReference type="HAMAP" id="MF_00530">
    <property type="entry name" value="ATP_synth_epsil_bac"/>
    <property type="match status" value="1"/>
</dbReference>
<dbReference type="InterPro" id="IPR001469">
    <property type="entry name" value="ATP_synth_F1_dsu/esu"/>
</dbReference>
<dbReference type="InterPro" id="IPR020546">
    <property type="entry name" value="ATP_synth_F1_dsu/esu_N"/>
</dbReference>
<dbReference type="InterPro" id="IPR020547">
    <property type="entry name" value="ATP_synth_F1_esu_C"/>
</dbReference>
<dbReference type="InterPro" id="IPR036771">
    <property type="entry name" value="ATPsynth_dsu/esu_N"/>
</dbReference>
<dbReference type="NCBIfam" id="TIGR01216">
    <property type="entry name" value="ATP_synt_epsi"/>
    <property type="match status" value="1"/>
</dbReference>
<dbReference type="NCBIfam" id="NF009980">
    <property type="entry name" value="PRK13446.1"/>
    <property type="match status" value="1"/>
</dbReference>
<dbReference type="PANTHER" id="PTHR13822">
    <property type="entry name" value="ATP SYNTHASE DELTA/EPSILON CHAIN"/>
    <property type="match status" value="1"/>
</dbReference>
<dbReference type="PANTHER" id="PTHR13822:SF10">
    <property type="entry name" value="ATP SYNTHASE EPSILON CHAIN, CHLOROPLASTIC"/>
    <property type="match status" value="1"/>
</dbReference>
<dbReference type="Pfam" id="PF00401">
    <property type="entry name" value="ATP-synt_DE"/>
    <property type="match status" value="1"/>
</dbReference>
<dbReference type="Pfam" id="PF02823">
    <property type="entry name" value="ATP-synt_DE_N"/>
    <property type="match status" value="1"/>
</dbReference>
<dbReference type="SUPFAM" id="SSF51344">
    <property type="entry name" value="Epsilon subunit of F1F0-ATP synthase N-terminal domain"/>
    <property type="match status" value="1"/>
</dbReference>
<accession>B8JCU9</accession>